<dbReference type="EMBL" id="AE009441">
    <property type="protein sequence ID" value="AAL63851.1"/>
    <property type="molecule type" value="Genomic_DNA"/>
</dbReference>
<dbReference type="SMR" id="Q8ZW51"/>
<dbReference type="FunCoup" id="Q8ZW51">
    <property type="interactions" value="195"/>
</dbReference>
<dbReference type="STRING" id="178306.PAE1971"/>
<dbReference type="EnsemblBacteria" id="AAL63851">
    <property type="protein sequence ID" value="AAL63851"/>
    <property type="gene ID" value="PAE1971"/>
</dbReference>
<dbReference type="KEGG" id="pai:PAE1971"/>
<dbReference type="PATRIC" id="fig|178306.9.peg.1455"/>
<dbReference type="eggNOG" id="arCOG04071">
    <property type="taxonomic scope" value="Archaea"/>
</dbReference>
<dbReference type="HOGENOM" id="CLU_026535_0_0_2"/>
<dbReference type="InParanoid" id="Q8ZW51"/>
<dbReference type="Proteomes" id="UP000002439">
    <property type="component" value="Chromosome"/>
</dbReference>
<dbReference type="GO" id="GO:0022625">
    <property type="term" value="C:cytosolic large ribosomal subunit"/>
    <property type="evidence" value="ECO:0000318"/>
    <property type="project" value="GO_Central"/>
</dbReference>
<dbReference type="GO" id="GO:0003723">
    <property type="term" value="F:RNA binding"/>
    <property type="evidence" value="ECO:0000318"/>
    <property type="project" value="GO_Central"/>
</dbReference>
<dbReference type="GO" id="GO:0019843">
    <property type="term" value="F:rRNA binding"/>
    <property type="evidence" value="ECO:0007669"/>
    <property type="project" value="UniProtKB-UniRule"/>
</dbReference>
<dbReference type="GO" id="GO:0003735">
    <property type="term" value="F:structural constituent of ribosome"/>
    <property type="evidence" value="ECO:0000318"/>
    <property type="project" value="GO_Central"/>
</dbReference>
<dbReference type="GO" id="GO:0006412">
    <property type="term" value="P:translation"/>
    <property type="evidence" value="ECO:0007669"/>
    <property type="project" value="UniProtKB-UniRule"/>
</dbReference>
<dbReference type="FunFam" id="3.40.1370.10:FF:000011">
    <property type="entry name" value="50S ribosomal protein L4"/>
    <property type="match status" value="1"/>
</dbReference>
<dbReference type="Gene3D" id="3.40.1370.10">
    <property type="match status" value="1"/>
</dbReference>
<dbReference type="HAMAP" id="MF_01328_A">
    <property type="entry name" value="Ribosomal_uL4_A"/>
    <property type="match status" value="1"/>
</dbReference>
<dbReference type="InterPro" id="IPR002136">
    <property type="entry name" value="Ribosomal_uL4"/>
</dbReference>
<dbReference type="InterPro" id="IPR023574">
    <property type="entry name" value="Ribosomal_uL4_dom_sf"/>
</dbReference>
<dbReference type="InterPro" id="IPR013000">
    <property type="entry name" value="Ribosomal_uL4_euk/arc_CS"/>
</dbReference>
<dbReference type="InterPro" id="IPR045240">
    <property type="entry name" value="Ribosomal_uL4_euk/arch"/>
</dbReference>
<dbReference type="InterPro" id="IPR019970">
    <property type="entry name" value="Ribosomall_uL4-arc"/>
</dbReference>
<dbReference type="NCBIfam" id="TIGR03672">
    <property type="entry name" value="rpl4p_arch"/>
    <property type="match status" value="1"/>
</dbReference>
<dbReference type="PANTHER" id="PTHR19431">
    <property type="entry name" value="60S RIBOSOMAL PROTEIN L4"/>
    <property type="match status" value="1"/>
</dbReference>
<dbReference type="Pfam" id="PF00573">
    <property type="entry name" value="Ribosomal_L4"/>
    <property type="match status" value="1"/>
</dbReference>
<dbReference type="SUPFAM" id="SSF52166">
    <property type="entry name" value="Ribosomal protein L4"/>
    <property type="match status" value="1"/>
</dbReference>
<dbReference type="PROSITE" id="PS00939">
    <property type="entry name" value="RIBOSOMAL_L1E"/>
    <property type="match status" value="1"/>
</dbReference>
<evidence type="ECO:0000255" key="1">
    <source>
        <dbReference type="HAMAP-Rule" id="MF_01328"/>
    </source>
</evidence>
<evidence type="ECO:0000305" key="2"/>
<accession>Q8ZW51</accession>
<reference key="1">
    <citation type="journal article" date="2002" name="Proc. Natl. Acad. Sci. U.S.A.">
        <title>Genome sequence of the hyperthermophilic crenarchaeon Pyrobaculum aerophilum.</title>
        <authorList>
            <person name="Fitz-Gibbon S.T."/>
            <person name="Ladner H."/>
            <person name="Kim U.-J."/>
            <person name="Stetter K.O."/>
            <person name="Simon M.I."/>
            <person name="Miller J.H."/>
        </authorList>
    </citation>
    <scope>NUCLEOTIDE SEQUENCE [LARGE SCALE GENOMIC DNA]</scope>
    <source>
        <strain>ATCC 51768 / DSM 7523 / JCM 9630 / CIP 104966 / NBRC 100827 / IM2</strain>
    </source>
</reference>
<proteinExistence type="inferred from homology"/>
<feature type="chain" id="PRO_0000129339" description="Large ribosomal subunit protein uL4">
    <location>
        <begin position="1"/>
        <end position="283"/>
    </location>
</feature>
<sequence>MMNEVLLKFKQLDLSPYIQPLPEKPAEKLKVYGIDGAYVADIEAPLHFLEPIRPDLIRRAYLSALSARFQPKGVYEGAGKEHSCESFGVGLGIARIPRYKGSLWPRGCFAPNTRGGRRAHPPKVEKKLHEEINKKEKKLAIRSAIAATAYRSWVAARGHVVEKVPSLPVVVVGDAEKINRAKEAKKLFEALGLWPDVERAAEGVKIRAGKGKMRGRRYKEPKSVLVVVSDLNAPLIAAVRNFPGVDVVAVNNLNILVLAPGGVPGRLTLWTAPAVEKLRGLFL</sequence>
<name>RL4_PYRAE</name>
<protein>
    <recommendedName>
        <fullName evidence="1">Large ribosomal subunit protein uL4</fullName>
    </recommendedName>
    <alternativeName>
        <fullName evidence="2">50S ribosomal protein L4</fullName>
    </alternativeName>
</protein>
<comment type="function">
    <text evidence="1">One of the primary rRNA binding proteins, this protein initially binds near the 5'-end of the 23S rRNA. It is important during the early stages of 50S assembly. It makes multiple contacts with different domains of the 23S rRNA in the assembled 50S subunit and ribosome.</text>
</comment>
<comment type="function">
    <text evidence="1">Forms part of the polypeptide exit tunnel.</text>
</comment>
<comment type="subunit">
    <text evidence="1">Part of the 50S ribosomal subunit.</text>
</comment>
<comment type="similarity">
    <text evidence="1">Belongs to the universal ribosomal protein uL4 family.</text>
</comment>
<organism>
    <name type="scientific">Pyrobaculum aerophilum (strain ATCC 51768 / DSM 7523 / JCM 9630 / CIP 104966 / NBRC 100827 / IM2)</name>
    <dbReference type="NCBI Taxonomy" id="178306"/>
    <lineage>
        <taxon>Archaea</taxon>
        <taxon>Thermoproteota</taxon>
        <taxon>Thermoprotei</taxon>
        <taxon>Thermoproteales</taxon>
        <taxon>Thermoproteaceae</taxon>
        <taxon>Pyrobaculum</taxon>
    </lineage>
</organism>
<gene>
    <name evidence="1" type="primary">rpl4</name>
    <name type="ordered locus">PAE1971</name>
</gene>
<keyword id="KW-1185">Reference proteome</keyword>
<keyword id="KW-0687">Ribonucleoprotein</keyword>
<keyword id="KW-0689">Ribosomal protein</keyword>
<keyword id="KW-0694">RNA-binding</keyword>
<keyword id="KW-0699">rRNA-binding</keyword>